<protein>
    <recommendedName>
        <fullName>HTH-type transcriptional regulator TfdT</fullName>
    </recommendedName>
</protein>
<evidence type="ECO:0000255" key="1">
    <source>
        <dbReference type="PROSITE-ProRule" id="PRU00253"/>
    </source>
</evidence>
<evidence type="ECO:0000305" key="2"/>
<sequence length="228" mass="24965">MEIRQLKYFVAVAEAGGFGTAAQRMHISQPPLTRQIQALERDIGAKLFERTARGVELTAAGKVFLDDARQLLALVQRSSRRSQAAARGESGELKLVYFGTPVFETVPAFVRTFLATYPDATVAVSHMTKEAQLESLLSGVVDIGFGRFYPVTEGVSSWNIGTETLHVAAADPWDTRVSRARAVVDLLDVPLILYPRGDRPSFADKVVSIFRDRFKKSPGGLLTFSASC</sequence>
<dbReference type="EMBL" id="U16782">
    <property type="protein sequence ID" value="AAC44724.1"/>
    <property type="molecule type" value="Genomic_DNA"/>
</dbReference>
<dbReference type="EMBL" id="AY365053">
    <property type="protein sequence ID" value="AAR31040.1"/>
    <property type="molecule type" value="Genomic_DNA"/>
</dbReference>
<dbReference type="EMBL" id="CP000093">
    <property type="protein sequence ID" value="AAZ65765.1"/>
    <property type="molecule type" value="Genomic_DNA"/>
</dbReference>
<dbReference type="EMBL" id="M35097">
    <property type="status" value="NOT_ANNOTATED_CDS"/>
    <property type="molecule type" value="Genomic_DNA"/>
</dbReference>
<dbReference type="PIR" id="S03396">
    <property type="entry name" value="S03396"/>
</dbReference>
<dbReference type="RefSeq" id="WP_011178387.1">
    <property type="nucleotide sequence ID" value="NZ_AY365053.1"/>
</dbReference>
<dbReference type="SMR" id="P42427"/>
<dbReference type="KEGG" id="reu:Reut_D6467"/>
<dbReference type="HOGENOM" id="CLU_039613_6_4_4"/>
<dbReference type="OrthoDB" id="5292387at2"/>
<dbReference type="GO" id="GO:0005737">
    <property type="term" value="C:cytoplasm"/>
    <property type="evidence" value="ECO:0007669"/>
    <property type="project" value="UniProtKB-SubCell"/>
</dbReference>
<dbReference type="GO" id="GO:0032993">
    <property type="term" value="C:protein-DNA complex"/>
    <property type="evidence" value="ECO:0007669"/>
    <property type="project" value="TreeGrafter"/>
</dbReference>
<dbReference type="GO" id="GO:0003677">
    <property type="term" value="F:DNA binding"/>
    <property type="evidence" value="ECO:0007669"/>
    <property type="project" value="UniProtKB-KW"/>
</dbReference>
<dbReference type="GO" id="GO:0003700">
    <property type="term" value="F:DNA-binding transcription factor activity"/>
    <property type="evidence" value="ECO:0007669"/>
    <property type="project" value="InterPro"/>
</dbReference>
<dbReference type="GO" id="GO:0009056">
    <property type="term" value="P:catabolic process"/>
    <property type="evidence" value="ECO:0007669"/>
    <property type="project" value="UniProtKB-KW"/>
</dbReference>
<dbReference type="FunFam" id="1.10.10.10:FF:000001">
    <property type="entry name" value="LysR family transcriptional regulator"/>
    <property type="match status" value="1"/>
</dbReference>
<dbReference type="Gene3D" id="3.40.190.10">
    <property type="entry name" value="Periplasmic binding protein-like II"/>
    <property type="match status" value="1"/>
</dbReference>
<dbReference type="Gene3D" id="1.10.10.10">
    <property type="entry name" value="Winged helix-like DNA-binding domain superfamily/Winged helix DNA-binding domain"/>
    <property type="match status" value="1"/>
</dbReference>
<dbReference type="InterPro" id="IPR005119">
    <property type="entry name" value="LysR_subst-bd"/>
</dbReference>
<dbReference type="InterPro" id="IPR000847">
    <property type="entry name" value="Tscrpt_reg_HTH_LysR"/>
</dbReference>
<dbReference type="InterPro" id="IPR036388">
    <property type="entry name" value="WH-like_DNA-bd_sf"/>
</dbReference>
<dbReference type="InterPro" id="IPR036390">
    <property type="entry name" value="WH_DNA-bd_sf"/>
</dbReference>
<dbReference type="PANTHER" id="PTHR30346:SF28">
    <property type="entry name" value="HTH-TYPE TRANSCRIPTIONAL REGULATOR CYNR"/>
    <property type="match status" value="1"/>
</dbReference>
<dbReference type="PANTHER" id="PTHR30346">
    <property type="entry name" value="TRANSCRIPTIONAL DUAL REGULATOR HCAR-RELATED"/>
    <property type="match status" value="1"/>
</dbReference>
<dbReference type="Pfam" id="PF00126">
    <property type="entry name" value="HTH_1"/>
    <property type="match status" value="1"/>
</dbReference>
<dbReference type="Pfam" id="PF03466">
    <property type="entry name" value="LysR_substrate"/>
    <property type="match status" value="1"/>
</dbReference>
<dbReference type="PRINTS" id="PR00039">
    <property type="entry name" value="HTHLYSR"/>
</dbReference>
<dbReference type="SUPFAM" id="SSF53850">
    <property type="entry name" value="Periplasmic binding protein-like II"/>
    <property type="match status" value="1"/>
</dbReference>
<dbReference type="SUPFAM" id="SSF46785">
    <property type="entry name" value="Winged helix' DNA-binding domain"/>
    <property type="match status" value="1"/>
</dbReference>
<dbReference type="PROSITE" id="PS50931">
    <property type="entry name" value="HTH_LYSR"/>
    <property type="match status" value="1"/>
</dbReference>
<reference key="1">
    <citation type="journal article" date="1996" name="J. Bacteriol.">
        <title>The tfdR gene product can successfully take over the role of the insertion element-inactivated TfdT protein as a transcriptional activator of the tfdCDEF gene cluster, which encodes chlorocatechol degradation in Ralstonia eutropha JMP134(pJP4).</title>
        <authorList>
            <person name="Leveau J.H."/>
            <person name="van der Meer J.R."/>
        </authorList>
    </citation>
    <scope>NUCLEOTIDE SEQUENCE [GENOMIC DNA]</scope>
    <source>
        <plasmid>pJP4</plasmid>
    </source>
</reference>
<reference key="2">
    <citation type="journal article" date="2004" name="Environ. Microbiol.">
        <title>Genetic organization of the catabolic plasmid pJP4 from Ralstonia eutropha JMP134 (pJP4) reveals mechanisms of adaptation to chloroaromatic pollutants and evolution of specialized chloroaromatic degradation pathways.</title>
        <authorList>
            <person name="Trefault N."/>
            <person name="De la Iglesia R."/>
            <person name="Molina A.M."/>
            <person name="Manzano M."/>
            <person name="Ledger T."/>
            <person name="Perez-Pantoja D."/>
            <person name="Sanchez M.A."/>
            <person name="Stuardo M."/>
            <person name="Gonzalez B."/>
        </authorList>
    </citation>
    <scope>NUCLEOTIDE SEQUENCE [GENOMIC DNA]</scope>
    <source>
        <plasmid>pJP4</plasmid>
    </source>
</reference>
<reference key="3">
    <citation type="journal article" date="2010" name="PLoS ONE">
        <title>The complete multipartite genome sequence of Cupriavidus necator JMP134, a versatile pollutant degrader.</title>
        <authorList>
            <person name="Lykidis A."/>
            <person name="Perez-Pantoja D."/>
            <person name="Ledger T."/>
            <person name="Mavromatis K."/>
            <person name="Anderson I.J."/>
            <person name="Ivanova N.N."/>
            <person name="Hooper S.D."/>
            <person name="Lapidus A."/>
            <person name="Lucas S."/>
            <person name="Gonzalez B."/>
            <person name="Kyrpides N.C."/>
        </authorList>
    </citation>
    <scope>NUCLEOTIDE SEQUENCE [LARGE SCALE GENOMIC DNA]</scope>
    <source>
        <strain>JMP134 / LMG 1197</strain>
        <plasmid>pPJ4</plasmid>
    </source>
</reference>
<reference key="4">
    <citation type="journal article" date="1990" name="J. Bacteriol.">
        <title>Organization and sequence analysis of the 2,4-dichlorophenol hydroxylase and dichlorocatechol oxidative operons of plasmid pJP4.</title>
        <authorList>
            <person name="Perkins E.J."/>
            <person name="Gordon M.P."/>
            <person name="Caceres O."/>
            <person name="Lurquin P.F."/>
        </authorList>
    </citation>
    <scope>NUCLEOTIDE SEQUENCE [GENOMIC DNA] OF 1-47</scope>
    <source>
        <plasmid>pJP4</plasmid>
    </source>
</reference>
<keyword id="KW-0058">Aromatic hydrocarbons catabolism</keyword>
<keyword id="KW-0963">Cytoplasm</keyword>
<keyword id="KW-0238">DNA-binding</keyword>
<keyword id="KW-0614">Plasmid</keyword>
<keyword id="KW-0804">Transcription</keyword>
<keyword id="KW-0805">Transcription regulation</keyword>
<proteinExistence type="inferred from homology"/>
<feature type="chain" id="PRO_0000105762" description="HTH-type transcriptional regulator TfdT">
    <location>
        <begin position="1"/>
        <end position="228"/>
    </location>
</feature>
<feature type="domain" description="HTH lysR-type" evidence="1">
    <location>
        <begin position="1"/>
        <end position="58"/>
    </location>
</feature>
<feature type="DNA-binding region" description="H-T-H motif" evidence="1">
    <location>
        <begin position="18"/>
        <end position="37"/>
    </location>
</feature>
<gene>
    <name type="primary">tfdT</name>
    <name type="ordered locus">Reut_D6467</name>
</gene>
<organism>
    <name type="scientific">Cupriavidus pinatubonensis (strain JMP 134 / LMG 1197)</name>
    <name type="common">Cupriavidus necator (strain JMP 134)</name>
    <dbReference type="NCBI Taxonomy" id="264198"/>
    <lineage>
        <taxon>Bacteria</taxon>
        <taxon>Pseudomonadati</taxon>
        <taxon>Pseudomonadota</taxon>
        <taxon>Betaproteobacteria</taxon>
        <taxon>Burkholderiales</taxon>
        <taxon>Burkholderiaceae</taxon>
        <taxon>Cupriavidus</taxon>
    </lineage>
</organism>
<geneLocation type="plasmid">
    <name>pJP4</name>
</geneLocation>
<geneLocation type="plasmid">
    <name>pPJ4</name>
</geneLocation>
<comment type="function">
    <text>Does not seem to be involved in the regulation of 3-chlorocatechol degradation. Does not activate the expression of its presumed target operon, tfdCDEF.</text>
</comment>
<comment type="subcellular location">
    <subcellularLocation>
        <location>Cytoplasm</location>
    </subcellularLocation>
</comment>
<comment type="similarity">
    <text evidence="2">Belongs to the LysR transcriptional regulatory family.</text>
</comment>
<accession>P42427</accession>
<accession>Q46M65</accession>
<name>TFDT_CUPPJ</name>